<name>GSM1_CLAL4</name>
<feature type="chain" id="PRO_0000406484" description="Glucose starvation modulator protein 1">
    <location>
        <begin position="1"/>
        <end position="487"/>
    </location>
</feature>
<feature type="domain" description="PAS">
    <location>
        <begin position="348"/>
        <end position="420"/>
    </location>
</feature>
<feature type="DNA-binding region" description="Zn(2)-C6 fungal-type" evidence="2">
    <location>
        <begin position="83"/>
        <end position="111"/>
    </location>
</feature>
<feature type="region of interest" description="Disordered" evidence="3">
    <location>
        <begin position="1"/>
        <end position="75"/>
    </location>
</feature>
<feature type="region of interest" description="Disordered" evidence="3">
    <location>
        <begin position="122"/>
        <end position="158"/>
    </location>
</feature>
<feature type="compositionally biased region" description="Polar residues" evidence="3">
    <location>
        <begin position="59"/>
        <end position="68"/>
    </location>
</feature>
<feature type="compositionally biased region" description="Polar residues" evidence="3">
    <location>
        <begin position="122"/>
        <end position="139"/>
    </location>
</feature>
<sequence>MSIRFPEIPGTTRAPGTSLSSRGIFPTSPGVPQIPTTPNSYSALLHPHKSEAKGKHPLSFSSSMTKRLTPQEKKARRPTSRACVFCHSKHLQCSHSRPCQNCIKRNLAHECRDVVRKRAKYMSTTEVPAVSGESSSESGRATGENGSEMGNPPDPQIAYLDGVFERSSIHESLQDSPMSTPASNFNSNFLNQEYMMLGDLISKPSSPSLDVPMMYAENPSRPFISLGQSDERPKSPEFNNFDFSSLDKAQYVSPLVSHHIYQNVQDIYANKVIDFDYPSSYHSLTSFLRQRFSFTGKSLSDSEKAKKRENLLMILRLIASYRPTFISTHKALFRPFDFQFLEMSFQRCLLDYENLSRLNASPTIIWRRTGEIVSMSNDLVALLGLNISTILSKRTFILELMYDDESIVEYFRLFESVAVGNLHSTIVTRCKLIKRPSEGIETNTSMDSDYIEFCSVWTVKRDLFDLPMMVVGQFLPVLPTPDGFRTY</sequence>
<organism>
    <name type="scientific">Clavispora lusitaniae (strain ATCC 42720)</name>
    <name type="common">Yeast</name>
    <name type="synonym">Candida lusitaniae</name>
    <dbReference type="NCBI Taxonomy" id="306902"/>
    <lineage>
        <taxon>Eukaryota</taxon>
        <taxon>Fungi</taxon>
        <taxon>Dikarya</taxon>
        <taxon>Ascomycota</taxon>
        <taxon>Saccharomycotina</taxon>
        <taxon>Pichiomycetes</taxon>
        <taxon>Metschnikowiaceae</taxon>
        <taxon>Clavispora</taxon>
    </lineage>
</organism>
<evidence type="ECO:0000250" key="1"/>
<evidence type="ECO:0000255" key="2">
    <source>
        <dbReference type="PROSITE-ProRule" id="PRU00227"/>
    </source>
</evidence>
<evidence type="ECO:0000256" key="3">
    <source>
        <dbReference type="SAM" id="MobiDB-lite"/>
    </source>
</evidence>
<evidence type="ECO:0000305" key="4"/>
<keyword id="KW-0238">DNA-binding</keyword>
<keyword id="KW-0479">Metal-binding</keyword>
<keyword id="KW-0539">Nucleus</keyword>
<keyword id="KW-1185">Reference proteome</keyword>
<keyword id="KW-0804">Transcription</keyword>
<keyword id="KW-0805">Transcription regulation</keyword>
<keyword id="KW-0862">Zinc</keyword>
<comment type="function">
    <text evidence="1">Transcription factor which regulates nonfermentable carbon utilization.</text>
</comment>
<comment type="subcellular location">
    <subcellularLocation>
        <location evidence="2">Nucleus</location>
    </subcellularLocation>
</comment>
<comment type="similarity">
    <text evidence="4">Belongs to the ERT1/acuK family.</text>
</comment>
<gene>
    <name type="primary">GSM1</name>
    <name type="ORF">CLUG_04089</name>
</gene>
<dbReference type="EMBL" id="CH408079">
    <property type="protein sequence ID" value="EEQ39961.1"/>
    <property type="molecule type" value="Genomic_DNA"/>
</dbReference>
<dbReference type="RefSeq" id="XP_002616848.1">
    <property type="nucleotide sequence ID" value="XM_002616802.1"/>
</dbReference>
<dbReference type="FunCoup" id="C4Y4V1">
    <property type="interactions" value="139"/>
</dbReference>
<dbReference type="GeneID" id="8496629"/>
<dbReference type="KEGG" id="clu:CLUG_04089"/>
<dbReference type="VEuPathDB" id="FungiDB:CLUG_04089"/>
<dbReference type="HOGENOM" id="CLU_010748_2_1_1"/>
<dbReference type="InParanoid" id="C4Y4V1"/>
<dbReference type="OMA" id="FCHEKHL"/>
<dbReference type="OrthoDB" id="92253at4891"/>
<dbReference type="Proteomes" id="UP000007703">
    <property type="component" value="Unassembled WGS sequence"/>
</dbReference>
<dbReference type="GO" id="GO:0005634">
    <property type="term" value="C:nucleus"/>
    <property type="evidence" value="ECO:0007669"/>
    <property type="project" value="UniProtKB-SubCell"/>
</dbReference>
<dbReference type="GO" id="GO:0000981">
    <property type="term" value="F:DNA-binding transcription factor activity, RNA polymerase II-specific"/>
    <property type="evidence" value="ECO:0007669"/>
    <property type="project" value="InterPro"/>
</dbReference>
<dbReference type="GO" id="GO:0000977">
    <property type="term" value="F:RNA polymerase II transcription regulatory region sequence-specific DNA binding"/>
    <property type="evidence" value="ECO:0007669"/>
    <property type="project" value="TreeGrafter"/>
</dbReference>
<dbReference type="GO" id="GO:0008270">
    <property type="term" value="F:zinc ion binding"/>
    <property type="evidence" value="ECO:0007669"/>
    <property type="project" value="InterPro"/>
</dbReference>
<dbReference type="GO" id="GO:0009267">
    <property type="term" value="P:cellular response to starvation"/>
    <property type="evidence" value="ECO:0007669"/>
    <property type="project" value="TreeGrafter"/>
</dbReference>
<dbReference type="CDD" id="cd00067">
    <property type="entry name" value="GAL4"/>
    <property type="match status" value="1"/>
</dbReference>
<dbReference type="Gene3D" id="4.10.240.10">
    <property type="entry name" value="Zn(2)-C6 fungal-type DNA-binding domain"/>
    <property type="match status" value="1"/>
</dbReference>
<dbReference type="InterPro" id="IPR050335">
    <property type="entry name" value="ERT1_acuK_gluconeogen_tf"/>
</dbReference>
<dbReference type="InterPro" id="IPR056751">
    <property type="entry name" value="PAS_13"/>
</dbReference>
<dbReference type="InterPro" id="IPR036864">
    <property type="entry name" value="Zn2-C6_fun-type_DNA-bd_sf"/>
</dbReference>
<dbReference type="InterPro" id="IPR001138">
    <property type="entry name" value="Zn2Cys6_DnaBD"/>
</dbReference>
<dbReference type="PANTHER" id="PTHR47659:SF8">
    <property type="entry name" value="GLUCOSE STARVATION MODULATOR PROTEIN 1"/>
    <property type="match status" value="1"/>
</dbReference>
<dbReference type="PANTHER" id="PTHR47659">
    <property type="entry name" value="ZN(II)2CYS6 TRANSCRIPTION FACTOR (EUROFUNG)-RELATED"/>
    <property type="match status" value="1"/>
</dbReference>
<dbReference type="Pfam" id="PF24990">
    <property type="entry name" value="PAS_13"/>
    <property type="match status" value="1"/>
</dbReference>
<dbReference type="Pfam" id="PF00172">
    <property type="entry name" value="Zn_clus"/>
    <property type="match status" value="1"/>
</dbReference>
<dbReference type="SMART" id="SM00066">
    <property type="entry name" value="GAL4"/>
    <property type="match status" value="1"/>
</dbReference>
<dbReference type="SUPFAM" id="SSF57701">
    <property type="entry name" value="Zn2/Cys6 DNA-binding domain"/>
    <property type="match status" value="1"/>
</dbReference>
<dbReference type="PROSITE" id="PS00463">
    <property type="entry name" value="ZN2_CY6_FUNGAL_1"/>
    <property type="match status" value="1"/>
</dbReference>
<dbReference type="PROSITE" id="PS50048">
    <property type="entry name" value="ZN2_CY6_FUNGAL_2"/>
    <property type="match status" value="1"/>
</dbReference>
<protein>
    <recommendedName>
        <fullName>Glucose starvation modulator protein 1</fullName>
    </recommendedName>
</protein>
<proteinExistence type="inferred from homology"/>
<reference key="1">
    <citation type="journal article" date="2009" name="Nature">
        <title>Evolution of pathogenicity and sexual reproduction in eight Candida genomes.</title>
        <authorList>
            <person name="Butler G."/>
            <person name="Rasmussen M.D."/>
            <person name="Lin M.F."/>
            <person name="Santos M.A.S."/>
            <person name="Sakthikumar S."/>
            <person name="Munro C.A."/>
            <person name="Rheinbay E."/>
            <person name="Grabherr M."/>
            <person name="Forche A."/>
            <person name="Reedy J.L."/>
            <person name="Agrafioti I."/>
            <person name="Arnaud M.B."/>
            <person name="Bates S."/>
            <person name="Brown A.J.P."/>
            <person name="Brunke S."/>
            <person name="Costanzo M.C."/>
            <person name="Fitzpatrick D.A."/>
            <person name="de Groot P.W.J."/>
            <person name="Harris D."/>
            <person name="Hoyer L.L."/>
            <person name="Hube B."/>
            <person name="Klis F.M."/>
            <person name="Kodira C."/>
            <person name="Lennard N."/>
            <person name="Logue M.E."/>
            <person name="Martin R."/>
            <person name="Neiman A.M."/>
            <person name="Nikolaou E."/>
            <person name="Quail M.A."/>
            <person name="Quinn J."/>
            <person name="Santos M.C."/>
            <person name="Schmitzberger F.F."/>
            <person name="Sherlock G."/>
            <person name="Shah P."/>
            <person name="Silverstein K.A.T."/>
            <person name="Skrzypek M.S."/>
            <person name="Soll D."/>
            <person name="Staggs R."/>
            <person name="Stansfield I."/>
            <person name="Stumpf M.P.H."/>
            <person name="Sudbery P.E."/>
            <person name="Srikantha T."/>
            <person name="Zeng Q."/>
            <person name="Berman J."/>
            <person name="Berriman M."/>
            <person name="Heitman J."/>
            <person name="Gow N.A.R."/>
            <person name="Lorenz M.C."/>
            <person name="Birren B.W."/>
            <person name="Kellis M."/>
            <person name="Cuomo C.A."/>
        </authorList>
    </citation>
    <scope>NUCLEOTIDE SEQUENCE [LARGE SCALE GENOMIC DNA]</scope>
    <source>
        <strain>ATCC 42720</strain>
    </source>
</reference>
<accession>C4Y4V1</accession>